<protein>
    <recommendedName>
        <fullName evidence="1">Ribosomal RNA large subunit methyltransferase H</fullName>
        <ecNumber evidence="1">2.1.1.177</ecNumber>
    </recommendedName>
    <alternativeName>
        <fullName evidence="1">23S rRNA (pseudouridine1915-N3)-methyltransferase</fullName>
    </alternativeName>
    <alternativeName>
        <fullName evidence="1">23S rRNA m3Psi1915 methyltransferase</fullName>
    </alternativeName>
    <alternativeName>
        <fullName evidence="1">rRNA (pseudouridine-N3-)-methyltransferase RlmH</fullName>
    </alternativeName>
</protein>
<comment type="function">
    <text evidence="1">Specifically methylates the pseudouridine at position 1915 (m3Psi1915) in 23S rRNA.</text>
</comment>
<comment type="catalytic activity">
    <reaction evidence="1">
        <text>pseudouridine(1915) in 23S rRNA + S-adenosyl-L-methionine = N(3)-methylpseudouridine(1915) in 23S rRNA + S-adenosyl-L-homocysteine + H(+)</text>
        <dbReference type="Rhea" id="RHEA:42752"/>
        <dbReference type="Rhea" id="RHEA-COMP:10221"/>
        <dbReference type="Rhea" id="RHEA-COMP:10222"/>
        <dbReference type="ChEBI" id="CHEBI:15378"/>
        <dbReference type="ChEBI" id="CHEBI:57856"/>
        <dbReference type="ChEBI" id="CHEBI:59789"/>
        <dbReference type="ChEBI" id="CHEBI:65314"/>
        <dbReference type="ChEBI" id="CHEBI:74486"/>
        <dbReference type="EC" id="2.1.1.177"/>
    </reaction>
</comment>
<comment type="subunit">
    <text evidence="1">Homodimer.</text>
</comment>
<comment type="subcellular location">
    <subcellularLocation>
        <location evidence="1">Cytoplasm</location>
    </subcellularLocation>
</comment>
<comment type="similarity">
    <text evidence="1">Belongs to the RNA methyltransferase RlmH family.</text>
</comment>
<organism>
    <name type="scientific">Rhizobium leguminosarum bv. trifolii (strain WSM2304)</name>
    <dbReference type="NCBI Taxonomy" id="395492"/>
    <lineage>
        <taxon>Bacteria</taxon>
        <taxon>Pseudomonadati</taxon>
        <taxon>Pseudomonadota</taxon>
        <taxon>Alphaproteobacteria</taxon>
        <taxon>Hyphomicrobiales</taxon>
        <taxon>Rhizobiaceae</taxon>
        <taxon>Rhizobium/Agrobacterium group</taxon>
        <taxon>Rhizobium</taxon>
    </lineage>
</organism>
<gene>
    <name evidence="1" type="primary">rlmH</name>
    <name type="ordered locus">Rleg2_3883</name>
</gene>
<accession>B5ZUF2</accession>
<evidence type="ECO:0000255" key="1">
    <source>
        <dbReference type="HAMAP-Rule" id="MF_00658"/>
    </source>
</evidence>
<proteinExistence type="inferred from homology"/>
<feature type="chain" id="PRO_0000366645" description="Ribosomal RNA large subunit methyltransferase H">
    <location>
        <begin position="1"/>
        <end position="160"/>
    </location>
</feature>
<feature type="binding site" evidence="1">
    <location>
        <position position="76"/>
    </location>
    <ligand>
        <name>S-adenosyl-L-methionine</name>
        <dbReference type="ChEBI" id="CHEBI:59789"/>
    </ligand>
</feature>
<feature type="binding site" evidence="1">
    <location>
        <position position="108"/>
    </location>
    <ligand>
        <name>S-adenosyl-L-methionine</name>
        <dbReference type="ChEBI" id="CHEBI:59789"/>
    </ligand>
</feature>
<feature type="binding site" evidence="1">
    <location>
        <begin position="127"/>
        <end position="132"/>
    </location>
    <ligand>
        <name>S-adenosyl-L-methionine</name>
        <dbReference type="ChEBI" id="CHEBI:59789"/>
    </ligand>
</feature>
<keyword id="KW-0963">Cytoplasm</keyword>
<keyword id="KW-0489">Methyltransferase</keyword>
<keyword id="KW-1185">Reference proteome</keyword>
<keyword id="KW-0698">rRNA processing</keyword>
<keyword id="KW-0949">S-adenosyl-L-methionine</keyword>
<keyword id="KW-0808">Transferase</keyword>
<name>RLMH_RHILW</name>
<sequence>MRIGLFAVGRLKSGPEKDLAARYFDRFAKAGPAVGLELARVAEVAESRASNAETRKREEAAMLLKSLADGSILILLDERGKALDSEAFASLLGSYRDQGKRDLTIAIGGADGLDPSLYDRADATLCLGKMTWPHQLVRILIAEQLYRAVTILSGHPYHRV</sequence>
<dbReference type="EC" id="2.1.1.177" evidence="1"/>
<dbReference type="EMBL" id="CP001191">
    <property type="protein sequence ID" value="ACI57145.1"/>
    <property type="molecule type" value="Genomic_DNA"/>
</dbReference>
<dbReference type="RefSeq" id="WP_012559353.1">
    <property type="nucleotide sequence ID" value="NC_011369.1"/>
</dbReference>
<dbReference type="SMR" id="B5ZUF2"/>
<dbReference type="STRING" id="395492.Rleg2_3883"/>
<dbReference type="KEGG" id="rlt:Rleg2_3883"/>
<dbReference type="eggNOG" id="COG1576">
    <property type="taxonomic scope" value="Bacteria"/>
</dbReference>
<dbReference type="HOGENOM" id="CLU_100552_1_1_5"/>
<dbReference type="Proteomes" id="UP000008330">
    <property type="component" value="Chromosome"/>
</dbReference>
<dbReference type="GO" id="GO:0005737">
    <property type="term" value="C:cytoplasm"/>
    <property type="evidence" value="ECO:0007669"/>
    <property type="project" value="UniProtKB-SubCell"/>
</dbReference>
<dbReference type="GO" id="GO:0070038">
    <property type="term" value="F:rRNA (pseudouridine-N3-)-methyltransferase activity"/>
    <property type="evidence" value="ECO:0007669"/>
    <property type="project" value="UniProtKB-UniRule"/>
</dbReference>
<dbReference type="CDD" id="cd18081">
    <property type="entry name" value="RlmH-like"/>
    <property type="match status" value="1"/>
</dbReference>
<dbReference type="Gene3D" id="3.40.1280.10">
    <property type="match status" value="1"/>
</dbReference>
<dbReference type="HAMAP" id="MF_00658">
    <property type="entry name" value="23SrRNA_methyltr_H"/>
    <property type="match status" value="1"/>
</dbReference>
<dbReference type="InterPro" id="IPR029028">
    <property type="entry name" value="Alpha/beta_knot_MTases"/>
</dbReference>
<dbReference type="InterPro" id="IPR003742">
    <property type="entry name" value="RlmH-like"/>
</dbReference>
<dbReference type="InterPro" id="IPR029026">
    <property type="entry name" value="tRNA_m1G_MTases_N"/>
</dbReference>
<dbReference type="NCBIfam" id="NF000989">
    <property type="entry name" value="PRK00103.2-3"/>
    <property type="match status" value="1"/>
</dbReference>
<dbReference type="PANTHER" id="PTHR33603">
    <property type="entry name" value="METHYLTRANSFERASE"/>
    <property type="match status" value="1"/>
</dbReference>
<dbReference type="PANTHER" id="PTHR33603:SF1">
    <property type="entry name" value="RIBOSOMAL RNA LARGE SUBUNIT METHYLTRANSFERASE H"/>
    <property type="match status" value="1"/>
</dbReference>
<dbReference type="Pfam" id="PF02590">
    <property type="entry name" value="SPOUT_MTase"/>
    <property type="match status" value="1"/>
</dbReference>
<dbReference type="PIRSF" id="PIRSF004505">
    <property type="entry name" value="MT_bac"/>
    <property type="match status" value="1"/>
</dbReference>
<dbReference type="SUPFAM" id="SSF75217">
    <property type="entry name" value="alpha/beta knot"/>
    <property type="match status" value="1"/>
</dbReference>
<reference key="1">
    <citation type="journal article" date="2010" name="Stand. Genomic Sci.">
        <title>Complete genome sequence of Rhizobium leguminosarum bv trifolii strain WSM2304, an effective microsymbiont of the South American clover Trifolium polymorphum.</title>
        <authorList>
            <person name="Reeve W."/>
            <person name="O'Hara G."/>
            <person name="Chain P."/>
            <person name="Ardley J."/>
            <person name="Brau L."/>
            <person name="Nandesena K."/>
            <person name="Tiwari R."/>
            <person name="Malfatti S."/>
            <person name="Kiss H."/>
            <person name="Lapidus A."/>
            <person name="Copeland A."/>
            <person name="Nolan M."/>
            <person name="Land M."/>
            <person name="Ivanova N."/>
            <person name="Mavromatis K."/>
            <person name="Markowitz V."/>
            <person name="Kyrpides N."/>
            <person name="Melino V."/>
            <person name="Denton M."/>
            <person name="Yates R."/>
            <person name="Howieson J."/>
        </authorList>
    </citation>
    <scope>NUCLEOTIDE SEQUENCE [LARGE SCALE GENOMIC DNA]</scope>
    <source>
        <strain>WSM2304</strain>
    </source>
</reference>